<evidence type="ECO:0000250" key="1">
    <source>
        <dbReference type="UniProtKB" id="P04798"/>
    </source>
</evidence>
<evidence type="ECO:0000255" key="2"/>
<evidence type="ECO:0000255" key="3">
    <source>
        <dbReference type="RuleBase" id="RU000461"/>
    </source>
</evidence>
<evidence type="ECO:0000269" key="4">
    <source>
    </source>
</evidence>
<evidence type="ECO:0000269" key="5">
    <source>
    </source>
</evidence>
<evidence type="ECO:0000269" key="6">
    <source>
    </source>
</evidence>
<evidence type="ECO:0000303" key="7">
    <source>
    </source>
</evidence>
<evidence type="ECO:0000303" key="8">
    <source>
    </source>
</evidence>
<evidence type="ECO:0000303" key="9">
    <source>
    </source>
</evidence>
<evidence type="ECO:0000303" key="10">
    <source>
    </source>
</evidence>
<evidence type="ECO:0000305" key="11"/>
<evidence type="ECO:0000312" key="12">
    <source>
        <dbReference type="EMBL" id="BAD54598.1"/>
    </source>
</evidence>
<evidence type="ECO:0000312" key="13">
    <source>
        <dbReference type="EMBL" id="BAF19823.1"/>
    </source>
</evidence>
<proteinExistence type="evidence at protein level"/>
<feature type="chain" id="PRO_0000430733" description="Ent-kaurene oxidase 2">
    <location>
        <begin position="1"/>
        <end position="505"/>
    </location>
</feature>
<feature type="transmembrane region" description="Helical" evidence="2">
    <location>
        <begin position="3"/>
        <end position="23"/>
    </location>
</feature>
<feature type="binding site" description="axial binding residue" evidence="1">
    <location>
        <position position="449"/>
    </location>
    <ligand>
        <name>heme</name>
        <dbReference type="ChEBI" id="CHEBI:30413"/>
    </ligand>
    <ligandPart>
        <name>Fe</name>
        <dbReference type="ChEBI" id="CHEBI:18248"/>
    </ligandPart>
</feature>
<feature type="mutagenesis site" description="In d35; semi-dwarf phenotype." evidence="4">
    <original>R</original>
    <variation>S</variation>
    <location>
        <position position="238"/>
    </location>
</feature>
<feature type="sequence conflict" description="In Ref. 1; AAT81230." ref="1">
    <original>A</original>
    <variation>V</variation>
    <location>
        <position position="11"/>
    </location>
</feature>
<feature type="sequence conflict" description="In Ref. 1; AAT81230." ref="1">
    <original>K</original>
    <variation>R</variation>
    <location>
        <position position="217"/>
    </location>
</feature>
<comment type="function">
    <text evidence="4 5 6">Catalyzes three successive oxidations of the 4-methyl group of ent-kaurene giving kaurenoic acid, a key step in gibberellins (GAs) biosynthesis. GAs, which are involved many processes, including stem elongation, play a central role in plant development.</text>
</comment>
<comment type="catalytic activity">
    <reaction evidence="5 6">
        <text>ent-kaur-16-ene + 3 reduced [NADPH--hemoprotein reductase] + 3 O2 = ent-kaur-16-en-19-oate + 3 oxidized [NADPH--hemoprotein reductase] + 4 H2O + 4 H(+)</text>
        <dbReference type="Rhea" id="RHEA:32323"/>
        <dbReference type="Rhea" id="RHEA-COMP:11964"/>
        <dbReference type="Rhea" id="RHEA-COMP:11965"/>
        <dbReference type="ChEBI" id="CHEBI:15377"/>
        <dbReference type="ChEBI" id="CHEBI:15378"/>
        <dbReference type="ChEBI" id="CHEBI:15379"/>
        <dbReference type="ChEBI" id="CHEBI:15415"/>
        <dbReference type="ChEBI" id="CHEBI:57297"/>
        <dbReference type="ChEBI" id="CHEBI:57618"/>
        <dbReference type="ChEBI" id="CHEBI:58210"/>
        <dbReference type="EC" id="1.14.14.86"/>
    </reaction>
</comment>
<comment type="cofactor">
    <cofactor evidence="1">
        <name>heme</name>
        <dbReference type="ChEBI" id="CHEBI:30413"/>
    </cofactor>
</comment>
<comment type="pathway">
    <text>Plant hormone biosynthesis; gibberellin biosynthesis.</text>
</comment>
<comment type="subcellular location">
    <subcellularLocation>
        <location evidence="2">Membrane</location>
        <topology evidence="2">Single-pass membrane protein</topology>
    </subcellularLocation>
</comment>
<comment type="tissue specificity">
    <text evidence="4">Widely expressed.</text>
</comment>
<comment type="disruption phenotype">
    <text evidence="4">Semi-dwarf phenotype.</text>
</comment>
<comment type="similarity">
    <text evidence="3">Belongs to the cytochrome P450 family.</text>
</comment>
<accession>Q5Z5R4</accession>
<accession>A0A0P0WXW2</accession>
<accession>Q68YV8</accession>
<sequence>MEAFVPGGAGAAAAAVGGFVAAAALAERAGVIAPRKRPNAPPAVPGLPIIGNLHQLKEKKPHQTFAKWAEIYGPIYTIRTGASSVVVLNSTEVAKEAMVAKFSSISTRKLSKALTVLTRDKSMVATSDYCDFHKMVKRYVMSSMLGTSAQKQFRDIRDMMIHNMLSTFHKLVKDDPHAPLIFRDVFKDELFRLSMIQSLGEDVSSVYVDEFGRDISKEEIYNATVTDMMMCAIEVDWRDFFPYLSWVPNKSFETRVFTTETRRTAVMRALIKQQKERIVRGEAKTCYLDFLLAENTLTDEQLMMLVWEALIEAADTTLVTTEWAMYELAKNPDKQERLYQEIREVCGDETVTEEHLPRLPYLNAVFHETLRRHSPVPLIPPRFVHEDTKLAGYDVPAGTEMVINLYGCNMNRKEWESPEEWVPERFAGGRLEVADMYKTMAFGAGRRACAGSLQATHIACAAVARFVQEFGWRLREGDEEKVDTVQLTAYKLHPLHVHLTRRGRM</sequence>
<name>C7016_ORYSJ</name>
<protein>
    <recommendedName>
        <fullName evidence="7">Ent-kaurene oxidase 2</fullName>
        <shortName evidence="7">OsKO2</shortName>
        <ecNumber evidence="5 6">1.14.14.86</ecNumber>
    </recommendedName>
    <alternativeName>
        <fullName evidence="10">Cytochrome P450 701A6</fullName>
    </alternativeName>
    <alternativeName>
        <fullName evidence="8">Ent-kaurene oxidase-like 2</fullName>
        <shortName evidence="8">OsKOL2</shortName>
    </alternativeName>
    <alternativeName>
        <fullName evidence="9">OsKOS3</fullName>
    </alternativeName>
    <alternativeName>
        <fullName evidence="8">Protein DWARF 35</fullName>
    </alternativeName>
</protein>
<keyword id="KW-0349">Heme</keyword>
<keyword id="KW-0408">Iron</keyword>
<keyword id="KW-0472">Membrane</keyword>
<keyword id="KW-0479">Metal-binding</keyword>
<keyword id="KW-0503">Monooxygenase</keyword>
<keyword id="KW-0521">NADP</keyword>
<keyword id="KW-0560">Oxidoreductase</keyword>
<keyword id="KW-1185">Reference proteome</keyword>
<keyword id="KW-0812">Transmembrane</keyword>
<keyword id="KW-1133">Transmembrane helix</keyword>
<gene>
    <name evidence="10" type="primary">CYP701A6</name>
    <name evidence="8" type="synonym">D35</name>
    <name evidence="13" type="ordered locus">Os06g0570100</name>
    <name evidence="11" type="ordered locus">LOC_Os06g37364</name>
    <name evidence="12" type="ORF">OSJNBa0062E01.38</name>
</gene>
<organism>
    <name type="scientific">Oryza sativa subsp. japonica</name>
    <name type="common">Rice</name>
    <dbReference type="NCBI Taxonomy" id="39947"/>
    <lineage>
        <taxon>Eukaryota</taxon>
        <taxon>Viridiplantae</taxon>
        <taxon>Streptophyta</taxon>
        <taxon>Embryophyta</taxon>
        <taxon>Tracheophyta</taxon>
        <taxon>Spermatophyta</taxon>
        <taxon>Magnoliopsida</taxon>
        <taxon>Liliopsida</taxon>
        <taxon>Poales</taxon>
        <taxon>Poaceae</taxon>
        <taxon>BOP clade</taxon>
        <taxon>Oryzoideae</taxon>
        <taxon>Oryzeae</taxon>
        <taxon>Oryzinae</taxon>
        <taxon>Oryza</taxon>
        <taxon>Oryza sativa</taxon>
    </lineage>
</organism>
<dbReference type="EC" id="1.14.14.86" evidence="5 6"/>
<dbReference type="EMBL" id="AY660665">
    <property type="protein sequence ID" value="AAT81230.1"/>
    <property type="molecule type" value="mRNA"/>
</dbReference>
<dbReference type="EMBL" id="AP005471">
    <property type="protein sequence ID" value="BAD54598.1"/>
    <property type="molecule type" value="Genomic_DNA"/>
</dbReference>
<dbReference type="EMBL" id="AP008212">
    <property type="protein sequence ID" value="BAF19823.1"/>
    <property type="molecule type" value="Genomic_DNA"/>
</dbReference>
<dbReference type="EMBL" id="AP014962">
    <property type="protein sequence ID" value="BAS98310.1"/>
    <property type="molecule type" value="Genomic_DNA"/>
</dbReference>
<dbReference type="RefSeq" id="XP_015643248.1">
    <property type="nucleotide sequence ID" value="XM_015787762.1"/>
</dbReference>
<dbReference type="SMR" id="Q5Z5R4"/>
<dbReference type="FunCoup" id="Q5Z5R4">
    <property type="interactions" value="312"/>
</dbReference>
<dbReference type="STRING" id="39947.Q5Z5R4"/>
<dbReference type="PaxDb" id="39947-Q5Z5R4"/>
<dbReference type="EnsemblPlants" id="Os06t0570100-01">
    <property type="protein sequence ID" value="Os06t0570100-01"/>
    <property type="gene ID" value="Os06g0570100"/>
</dbReference>
<dbReference type="Gramene" id="Os06t0570100-01">
    <property type="protein sequence ID" value="Os06t0570100-01"/>
    <property type="gene ID" value="Os06g0570100"/>
</dbReference>
<dbReference type="KEGG" id="dosa:Os06g0570100"/>
<dbReference type="eggNOG" id="KOG0156">
    <property type="taxonomic scope" value="Eukaryota"/>
</dbReference>
<dbReference type="HOGENOM" id="CLU_001570_4_0_1"/>
<dbReference type="InParanoid" id="Q5Z5R4"/>
<dbReference type="OMA" id="RYVMSSM"/>
<dbReference type="OrthoDB" id="2789670at2759"/>
<dbReference type="BRENDA" id="1.14.14.86">
    <property type="organism ID" value="4460"/>
</dbReference>
<dbReference type="PlantReactome" id="R-OSA-1119557">
    <property type="pathway name" value="GA12 biosynthesis"/>
</dbReference>
<dbReference type="UniPathway" id="UPA00390"/>
<dbReference type="Proteomes" id="UP000000763">
    <property type="component" value="Chromosome 6"/>
</dbReference>
<dbReference type="Proteomes" id="UP000059680">
    <property type="component" value="Chromosome 6"/>
</dbReference>
<dbReference type="GO" id="GO:0009707">
    <property type="term" value="C:chloroplast outer membrane"/>
    <property type="evidence" value="ECO:0000318"/>
    <property type="project" value="GO_Central"/>
</dbReference>
<dbReference type="GO" id="GO:0052615">
    <property type="term" value="F:ent-kaurene oxidase activity"/>
    <property type="evidence" value="ECO:0000314"/>
    <property type="project" value="UniProtKB"/>
</dbReference>
<dbReference type="GO" id="GO:0020037">
    <property type="term" value="F:heme binding"/>
    <property type="evidence" value="ECO:0007669"/>
    <property type="project" value="InterPro"/>
</dbReference>
<dbReference type="GO" id="GO:0005506">
    <property type="term" value="F:iron ion binding"/>
    <property type="evidence" value="ECO:0007669"/>
    <property type="project" value="InterPro"/>
</dbReference>
<dbReference type="GO" id="GO:0016709">
    <property type="term" value="F:oxidoreductase activity, acting on paired donors, with incorporation or reduction of molecular oxygen, NAD(P)H as one donor, and incorporation of one atom of oxygen"/>
    <property type="evidence" value="ECO:0000318"/>
    <property type="project" value="GO_Central"/>
</dbReference>
<dbReference type="GO" id="GO:0010241">
    <property type="term" value="P:ent-kaurene oxidation to kaurenoic acid"/>
    <property type="evidence" value="ECO:0000314"/>
    <property type="project" value="UniProtKB"/>
</dbReference>
<dbReference type="GO" id="GO:0009686">
    <property type="term" value="P:gibberellin biosynthetic process"/>
    <property type="evidence" value="ECO:0000315"/>
    <property type="project" value="UniProtKB"/>
</dbReference>
<dbReference type="CDD" id="cd11075">
    <property type="entry name" value="CYP77_89"/>
    <property type="match status" value="1"/>
</dbReference>
<dbReference type="FunFam" id="1.10.630.10:FF:000062">
    <property type="entry name" value="Ent-kaurene oxidase 2"/>
    <property type="match status" value="1"/>
</dbReference>
<dbReference type="Gene3D" id="1.10.630.10">
    <property type="entry name" value="Cytochrome P450"/>
    <property type="match status" value="1"/>
</dbReference>
<dbReference type="InterPro" id="IPR001128">
    <property type="entry name" value="Cyt_P450"/>
</dbReference>
<dbReference type="InterPro" id="IPR017972">
    <property type="entry name" value="Cyt_P450_CS"/>
</dbReference>
<dbReference type="InterPro" id="IPR002401">
    <property type="entry name" value="Cyt_P450_E_grp-I"/>
</dbReference>
<dbReference type="InterPro" id="IPR036396">
    <property type="entry name" value="Cyt_P450_sf"/>
</dbReference>
<dbReference type="InterPro" id="IPR044225">
    <property type="entry name" value="KO_chloroplastic"/>
</dbReference>
<dbReference type="PANTHER" id="PTHR47283">
    <property type="entry name" value="ENT-KAURENE OXIDASE, CHLOROPLASTIC"/>
    <property type="match status" value="1"/>
</dbReference>
<dbReference type="PANTHER" id="PTHR47283:SF1">
    <property type="entry name" value="ENT-KAURENE OXIDASE, CHLOROPLASTIC"/>
    <property type="match status" value="1"/>
</dbReference>
<dbReference type="Pfam" id="PF00067">
    <property type="entry name" value="p450"/>
    <property type="match status" value="1"/>
</dbReference>
<dbReference type="PRINTS" id="PR00463">
    <property type="entry name" value="EP450I"/>
</dbReference>
<dbReference type="PRINTS" id="PR00385">
    <property type="entry name" value="P450"/>
</dbReference>
<dbReference type="SUPFAM" id="SSF48264">
    <property type="entry name" value="Cytochrome P450"/>
    <property type="match status" value="1"/>
</dbReference>
<dbReference type="PROSITE" id="PS00086">
    <property type="entry name" value="CYTOCHROME_P450"/>
    <property type="match status" value="1"/>
</dbReference>
<reference key="1">
    <citation type="journal article" date="2005" name="Plant Physiol.">
        <title>The rice dwarf virus P2 protein interacts with ent-kaurene oxidases in vivo, leading to reduced biosynthesis of gibberellins and rice dwarf symptoms.</title>
        <authorList>
            <person name="Zhu S."/>
            <person name="Gao F."/>
            <person name="Cao X."/>
            <person name="Chen M."/>
            <person name="Ye G."/>
            <person name="Wei C."/>
            <person name="Li Y."/>
        </authorList>
    </citation>
    <scope>NUCLEOTIDE SEQUENCE [MRNA]</scope>
    <source>
        <strain>cv. Xiushui 11</strain>
    </source>
</reference>
<reference key="2">
    <citation type="journal article" date="2005" name="Nature">
        <title>The map-based sequence of the rice genome.</title>
        <authorList>
            <consortium name="International rice genome sequencing project (IRGSP)"/>
        </authorList>
    </citation>
    <scope>NUCLEOTIDE SEQUENCE [LARGE SCALE GENOMIC DNA]</scope>
    <source>
        <strain>cv. Nipponbare</strain>
    </source>
</reference>
<reference key="3">
    <citation type="journal article" date="2008" name="Nucleic Acids Res.">
        <title>The rice annotation project database (RAP-DB): 2008 update.</title>
        <authorList>
            <consortium name="The rice annotation project (RAP)"/>
        </authorList>
    </citation>
    <scope>GENOME REANNOTATION</scope>
    <source>
        <strain>cv. Nipponbare</strain>
    </source>
</reference>
<reference key="4">
    <citation type="journal article" date="2013" name="Rice">
        <title>Improvement of the Oryza sativa Nipponbare reference genome using next generation sequence and optical map data.</title>
        <authorList>
            <person name="Kawahara Y."/>
            <person name="de la Bastide M."/>
            <person name="Hamilton J.P."/>
            <person name="Kanamori H."/>
            <person name="McCombie W.R."/>
            <person name="Ouyang S."/>
            <person name="Schwartz D.C."/>
            <person name="Tanaka T."/>
            <person name="Wu J."/>
            <person name="Zhou S."/>
            <person name="Childs K.L."/>
            <person name="Davidson R.M."/>
            <person name="Lin H."/>
            <person name="Quesada-Ocampo L."/>
            <person name="Vaillancourt B."/>
            <person name="Sakai H."/>
            <person name="Lee S.S."/>
            <person name="Kim J."/>
            <person name="Numa H."/>
            <person name="Itoh T."/>
            <person name="Buell C.R."/>
            <person name="Matsumoto T."/>
        </authorList>
    </citation>
    <scope>GENOME REANNOTATION</scope>
    <source>
        <strain>cv. Nipponbare</strain>
    </source>
</reference>
<reference key="5">
    <citation type="journal article" date="2004" name="Plant Mol. Biol.">
        <title>A rice semi-dwarf gene, Tan-Ginbozu (D35), encodes the gibberellin biosynthesis enzyme, ent-kaurene oxidase.</title>
        <authorList>
            <person name="Itoh H."/>
            <person name="Tatsumi T."/>
            <person name="Sakamoto T."/>
            <person name="Otomo K."/>
            <person name="Toyomasu T."/>
            <person name="Kitano H."/>
            <person name="Ashikari M."/>
            <person name="Ichihara S."/>
            <person name="Matsuoka M."/>
        </authorList>
    </citation>
    <scope>FUNCTION</scope>
    <scope>TISSUE SPECIFICITY</scope>
    <scope>DISRUPTION PHENOTYPE</scope>
    <scope>MUTAGENESIS OF ARG-238</scope>
</reference>
<reference key="6">
    <citation type="journal article" date="2004" name="Plant Physiol.">
        <title>An overview of gibberellin metabolism enzyme genes and their related mutants in rice.</title>
        <authorList>
            <person name="Sakamoto T."/>
            <person name="Miura K."/>
            <person name="Itoh H."/>
            <person name="Tatsumi T."/>
            <person name="Ueguchi-Tanaka M."/>
            <person name="Ishiyama K."/>
            <person name="Kobayashi M."/>
            <person name="Agrawal G.K."/>
            <person name="Takeda S."/>
            <person name="Abe K."/>
            <person name="Miyao A."/>
            <person name="Hirochika H."/>
            <person name="Kitano H."/>
            <person name="Ashikari M."/>
            <person name="Matsuoka M."/>
        </authorList>
    </citation>
    <scope>GENE FAMILY</scope>
</reference>
<reference key="7">
    <citation type="journal article" date="2012" name="Bioorg. Med. Chem. Lett.">
        <title>A conformationally restricted uniconazole analogue as a specific inhibitor of rice ent-kaurene oxidase, CYP701A6.</title>
        <authorList>
            <person name="Todoroki Y."/>
            <person name="Naiki K."/>
            <person name="Muramatsu T."/>
            <person name="Ohnishi T."/>
            <person name="Ueno K."/>
            <person name="Mizutani M."/>
            <person name="Hirai N."/>
        </authorList>
    </citation>
    <scope>FUNCTION</scope>
    <scope>CATALYTIC ACTIVITY</scope>
</reference>
<reference key="8">
    <citation type="journal article" date="2012" name="Plant Physiol.">
        <title>CYP701A8: a rice ent-kaurene oxidase paralog diverted to more specialized diterpenoid metabolism.</title>
        <authorList>
            <person name="Wang Q."/>
            <person name="Hillwig M.L."/>
            <person name="Wu Y."/>
            <person name="Peters R.J."/>
        </authorList>
    </citation>
    <scope>FUNCTION</scope>
    <scope>CATALYTIC ACTIVITY</scope>
</reference>